<name>Y3544_METJA</name>
<keyword id="KW-0067">ATP-binding</keyword>
<keyword id="KW-0547">Nucleotide-binding</keyword>
<keyword id="KW-0614">Plasmid</keyword>
<keyword id="KW-1185">Reference proteome</keyword>
<dbReference type="EMBL" id="L77118">
    <property type="protein sequence ID" value="AAC37113.1"/>
    <property type="molecule type" value="Genomic_DNA"/>
</dbReference>
<dbReference type="PIR" id="C64515">
    <property type="entry name" value="C64515"/>
</dbReference>
<dbReference type="PaxDb" id="243232-MJ_ECL44"/>
<dbReference type="EnsemblBacteria" id="AAC37113">
    <property type="protein sequence ID" value="AAC37113"/>
    <property type="gene ID" value="MJ_ECL44"/>
</dbReference>
<dbReference type="KEGG" id="mja:MJ_ECL44"/>
<dbReference type="eggNOG" id="arCOG03240">
    <property type="taxonomic scope" value="Archaea"/>
</dbReference>
<dbReference type="HOGENOM" id="CLU_838406_0_0_2"/>
<dbReference type="InParanoid" id="Q60299"/>
<dbReference type="OrthoDB" id="25344at2157"/>
<dbReference type="Proteomes" id="UP000000805">
    <property type="component" value="Plasmid pDSM2661_1"/>
</dbReference>
<dbReference type="GO" id="GO:0005524">
    <property type="term" value="F:ATP binding"/>
    <property type="evidence" value="ECO:0007669"/>
    <property type="project" value="UniProtKB-KW"/>
</dbReference>
<dbReference type="GO" id="GO:0000731">
    <property type="term" value="P:DNA synthesis involved in DNA repair"/>
    <property type="evidence" value="ECO:0000318"/>
    <property type="project" value="GO_Central"/>
</dbReference>
<dbReference type="GO" id="GO:0006302">
    <property type="term" value="P:double-strand break repair"/>
    <property type="evidence" value="ECO:0000318"/>
    <property type="project" value="GO_Central"/>
</dbReference>
<dbReference type="Gene3D" id="3.40.50.300">
    <property type="entry name" value="P-loop containing nucleotide triphosphate hydrolases"/>
    <property type="match status" value="1"/>
</dbReference>
<dbReference type="InterPro" id="IPR041685">
    <property type="entry name" value="AAA_GajA/Old/RecF-like"/>
</dbReference>
<dbReference type="InterPro" id="IPR027417">
    <property type="entry name" value="P-loop_NTPase"/>
</dbReference>
<dbReference type="PANTHER" id="PTHR32182:SF22">
    <property type="entry name" value="ATP-DEPENDENT ENDONUCLEASE, OLD FAMILY-RELATED"/>
    <property type="match status" value="1"/>
</dbReference>
<dbReference type="PANTHER" id="PTHR32182">
    <property type="entry name" value="DNA REPLICATION AND REPAIR PROTEIN RECF"/>
    <property type="match status" value="1"/>
</dbReference>
<dbReference type="Pfam" id="PF13175">
    <property type="entry name" value="AAA_15"/>
    <property type="match status" value="1"/>
</dbReference>
<dbReference type="SUPFAM" id="SSF52540">
    <property type="entry name" value="P-loop containing nucleoside triphosphate hydrolases"/>
    <property type="match status" value="1"/>
</dbReference>
<feature type="chain" id="PRO_0000107523" description="Uncharacterized protein MJECL44">
    <location>
        <begin position="1"/>
        <end position="331"/>
    </location>
</feature>
<feature type="binding site" evidence="1">
    <location>
        <begin position="43"/>
        <end position="50"/>
    </location>
    <ligand>
        <name>ATP</name>
        <dbReference type="ChEBI" id="CHEBI:30616"/>
    </ligand>
</feature>
<geneLocation type="plasmid">
    <name>large ECE</name>
</geneLocation>
<reference key="1">
    <citation type="journal article" date="1996" name="Science">
        <title>Complete genome sequence of the methanogenic archaeon, Methanococcus jannaschii.</title>
        <authorList>
            <person name="Bult C.J."/>
            <person name="White O."/>
            <person name="Olsen G.J."/>
            <person name="Zhou L."/>
            <person name="Fleischmann R.D."/>
            <person name="Sutton G.G."/>
            <person name="Blake J.A."/>
            <person name="FitzGerald L.M."/>
            <person name="Clayton R.A."/>
            <person name="Gocayne J.D."/>
            <person name="Kerlavage A.R."/>
            <person name="Dougherty B.A."/>
            <person name="Tomb J.-F."/>
            <person name="Adams M.D."/>
            <person name="Reich C.I."/>
            <person name="Overbeek R."/>
            <person name="Kirkness E.F."/>
            <person name="Weinstock K.G."/>
            <person name="Merrick J.M."/>
            <person name="Glodek A."/>
            <person name="Scott J.L."/>
            <person name="Geoghagen N.S.M."/>
            <person name="Weidman J.F."/>
            <person name="Fuhrmann J.L."/>
            <person name="Nguyen D."/>
            <person name="Utterback T.R."/>
            <person name="Kelley J.M."/>
            <person name="Peterson J.D."/>
            <person name="Sadow P.W."/>
            <person name="Hanna M.C."/>
            <person name="Cotton M.D."/>
            <person name="Roberts K.M."/>
            <person name="Hurst M.A."/>
            <person name="Kaine B.P."/>
            <person name="Borodovsky M."/>
            <person name="Klenk H.-P."/>
            <person name="Fraser C.M."/>
            <person name="Smith H.O."/>
            <person name="Woese C.R."/>
            <person name="Venter J.C."/>
        </authorList>
    </citation>
    <scope>NUCLEOTIDE SEQUENCE [LARGE SCALE GENOMIC DNA]</scope>
    <source>
        <strain>ATCC 43067 / DSM 2661 / JAL-1 / JCM 10045 / NBRC 100440</strain>
    </source>
</reference>
<gene>
    <name type="ordered locus">MJECL44</name>
</gene>
<accession>Q60299</accession>
<sequence>MFIKWGDRLMTKTLHLTKVTIRNFRSIKVAHINNIGDIAVFVGANESGKSNILKALNWFGTDKPLGGDDIPVEFLGKENKEYSKKPIIEAYFEIVNKDKFKEKIISNIKEILEVIKVDINEDILINFEDMLNKIQFLKFEKYADGLFKTYIYDDQLEDITKEFYDCFKNVISKKTPLDLFNLIYEEVLKEEVKKQNIPENQISNAVANIRGNPNFNNHYRKILDEIRTLNTFEEFYEICKRIENIVKSIPNTSVSISIPGRNIQLNPYNIFTEILTKFNSIVTIAFINLKPKFVYLDEEMELKGAVIKNTSWSNTLKEENKTTLLMPDFLE</sequence>
<organism>
    <name type="scientific">Methanocaldococcus jannaschii (strain ATCC 43067 / DSM 2661 / JAL-1 / JCM 10045 / NBRC 100440)</name>
    <name type="common">Methanococcus jannaschii</name>
    <dbReference type="NCBI Taxonomy" id="243232"/>
    <lineage>
        <taxon>Archaea</taxon>
        <taxon>Methanobacteriati</taxon>
        <taxon>Methanobacteriota</taxon>
        <taxon>Methanomada group</taxon>
        <taxon>Methanococci</taxon>
        <taxon>Methanococcales</taxon>
        <taxon>Methanocaldococcaceae</taxon>
        <taxon>Methanocaldococcus</taxon>
    </lineage>
</organism>
<protein>
    <recommendedName>
        <fullName>Uncharacterized protein MJECL44</fullName>
    </recommendedName>
</protein>
<proteinExistence type="predicted"/>
<evidence type="ECO:0000255" key="1"/>